<keyword id="KW-0030">Aminoacyl-tRNA synthetase</keyword>
<keyword id="KW-0067">ATP-binding</keyword>
<keyword id="KW-0963">Cytoplasm</keyword>
<keyword id="KW-0436">Ligase</keyword>
<keyword id="KW-0479">Metal-binding</keyword>
<keyword id="KW-0547">Nucleotide-binding</keyword>
<keyword id="KW-0648">Protein biosynthesis</keyword>
<keyword id="KW-0694">RNA-binding</keyword>
<keyword id="KW-0820">tRNA-binding</keyword>
<keyword id="KW-0862">Zinc</keyword>
<accession>Q12WD4</accession>
<evidence type="ECO:0000255" key="1">
    <source>
        <dbReference type="HAMAP-Rule" id="MF_00184"/>
    </source>
</evidence>
<feature type="chain" id="PRO_1000020427" description="Threonine--tRNA ligase">
    <location>
        <begin position="1"/>
        <end position="635"/>
    </location>
</feature>
<feature type="region of interest" description="Editing domain" evidence="1">
    <location>
        <begin position="1"/>
        <end position="144"/>
    </location>
</feature>
<feature type="region of interest" description="Catalytic" evidence="1">
    <location>
        <begin position="215"/>
        <end position="514"/>
    </location>
</feature>
<feature type="binding site" evidence="1">
    <location>
        <position position="307"/>
    </location>
    <ligand>
        <name>Zn(2+)</name>
        <dbReference type="ChEBI" id="CHEBI:29105"/>
    </ligand>
</feature>
<feature type="binding site" evidence="1">
    <location>
        <position position="359"/>
    </location>
    <ligand>
        <name>Zn(2+)</name>
        <dbReference type="ChEBI" id="CHEBI:29105"/>
    </ligand>
</feature>
<feature type="binding site" evidence="1">
    <location>
        <position position="483"/>
    </location>
    <ligand>
        <name>Zn(2+)</name>
        <dbReference type="ChEBI" id="CHEBI:29105"/>
    </ligand>
</feature>
<comment type="function">
    <text evidence="1">Catalyzes the attachment of threonine to tRNA(Thr) in a two-step reaction: L-threonine is first activated by ATP to form Thr-AMP and then transferred to the acceptor end of tRNA(Thr). Also edits incorrectly charged L-seryl-tRNA(Thr).</text>
</comment>
<comment type="catalytic activity">
    <reaction evidence="1">
        <text>tRNA(Thr) + L-threonine + ATP = L-threonyl-tRNA(Thr) + AMP + diphosphate + H(+)</text>
        <dbReference type="Rhea" id="RHEA:24624"/>
        <dbReference type="Rhea" id="RHEA-COMP:9670"/>
        <dbReference type="Rhea" id="RHEA-COMP:9704"/>
        <dbReference type="ChEBI" id="CHEBI:15378"/>
        <dbReference type="ChEBI" id="CHEBI:30616"/>
        <dbReference type="ChEBI" id="CHEBI:33019"/>
        <dbReference type="ChEBI" id="CHEBI:57926"/>
        <dbReference type="ChEBI" id="CHEBI:78442"/>
        <dbReference type="ChEBI" id="CHEBI:78534"/>
        <dbReference type="ChEBI" id="CHEBI:456215"/>
        <dbReference type="EC" id="6.1.1.3"/>
    </reaction>
</comment>
<comment type="cofactor">
    <cofactor evidence="1">
        <name>Zn(2+)</name>
        <dbReference type="ChEBI" id="CHEBI:29105"/>
    </cofactor>
    <text evidence="1">Binds 1 zinc ion per subunit.</text>
</comment>
<comment type="subunit">
    <text evidence="1">Homodimer.</text>
</comment>
<comment type="subcellular location">
    <subcellularLocation>
        <location evidence="1">Cytoplasm</location>
    </subcellularLocation>
</comment>
<comment type="domain">
    <text evidence="1">The N-terminal domain is an archaea-specific tRNA-editing domain that hydrolyzes incorrectly charged L-seryl-tRNA(Thr). Catalysis of tRNA editing is performed by the charged tRNA itself.</text>
</comment>
<comment type="similarity">
    <text evidence="1">Belongs to the class-II aminoacyl-tRNA synthetase family.</text>
</comment>
<reference key="1">
    <citation type="journal article" date="2009" name="ISME J.">
        <title>The genome sequence of the psychrophilic archaeon, Methanococcoides burtonii: the role of genome evolution in cold adaptation.</title>
        <authorList>
            <person name="Allen M.A."/>
            <person name="Lauro F.M."/>
            <person name="Williams T.J."/>
            <person name="Burg D."/>
            <person name="Siddiqui K.S."/>
            <person name="De Francisci D."/>
            <person name="Chong K.W."/>
            <person name="Pilak O."/>
            <person name="Chew H.H."/>
            <person name="De Maere M.Z."/>
            <person name="Ting L."/>
            <person name="Katrib M."/>
            <person name="Ng C."/>
            <person name="Sowers K.R."/>
            <person name="Galperin M.Y."/>
            <person name="Anderson I.J."/>
            <person name="Ivanova N."/>
            <person name="Dalin E."/>
            <person name="Martinez M."/>
            <person name="Lapidus A."/>
            <person name="Hauser L."/>
            <person name="Land M."/>
            <person name="Thomas T."/>
            <person name="Cavicchioli R."/>
        </authorList>
    </citation>
    <scope>NUCLEOTIDE SEQUENCE [LARGE SCALE GENOMIC DNA]</scope>
    <source>
        <strain>DSM 6242 / NBRC 107633 / OCM 468 / ACE-M</strain>
    </source>
</reference>
<name>SYT_METBU</name>
<protein>
    <recommendedName>
        <fullName evidence="1">Threonine--tRNA ligase</fullName>
        <ecNumber evidence="1">6.1.1.3</ecNumber>
    </recommendedName>
    <alternativeName>
        <fullName evidence="1">Threonyl-tRNA synthetase</fullName>
        <shortName evidence="1">ThrRS</shortName>
    </alternativeName>
</protein>
<dbReference type="EC" id="6.1.1.3" evidence="1"/>
<dbReference type="EMBL" id="CP000300">
    <property type="protein sequence ID" value="ABE52242.1"/>
    <property type="molecule type" value="Genomic_DNA"/>
</dbReference>
<dbReference type="RefSeq" id="WP_011499387.1">
    <property type="nucleotide sequence ID" value="NC_007955.1"/>
</dbReference>
<dbReference type="SMR" id="Q12WD4"/>
<dbReference type="STRING" id="259564.Mbur_1324"/>
<dbReference type="GeneID" id="3998613"/>
<dbReference type="KEGG" id="mbu:Mbur_1324"/>
<dbReference type="HOGENOM" id="CLU_029833_0_0_2"/>
<dbReference type="OrthoDB" id="372136at2157"/>
<dbReference type="Proteomes" id="UP000001979">
    <property type="component" value="Chromosome"/>
</dbReference>
<dbReference type="GO" id="GO:0005737">
    <property type="term" value="C:cytoplasm"/>
    <property type="evidence" value="ECO:0007669"/>
    <property type="project" value="UniProtKB-SubCell"/>
</dbReference>
<dbReference type="GO" id="GO:0005524">
    <property type="term" value="F:ATP binding"/>
    <property type="evidence" value="ECO:0007669"/>
    <property type="project" value="UniProtKB-UniRule"/>
</dbReference>
<dbReference type="GO" id="GO:0004829">
    <property type="term" value="F:threonine-tRNA ligase activity"/>
    <property type="evidence" value="ECO:0007669"/>
    <property type="project" value="UniProtKB-UniRule"/>
</dbReference>
<dbReference type="GO" id="GO:0000049">
    <property type="term" value="F:tRNA binding"/>
    <property type="evidence" value="ECO:0007669"/>
    <property type="project" value="UniProtKB-KW"/>
</dbReference>
<dbReference type="GO" id="GO:0008270">
    <property type="term" value="F:zinc ion binding"/>
    <property type="evidence" value="ECO:0007669"/>
    <property type="project" value="InterPro"/>
</dbReference>
<dbReference type="GO" id="GO:0006435">
    <property type="term" value="P:threonyl-tRNA aminoacylation"/>
    <property type="evidence" value="ECO:0007669"/>
    <property type="project" value="UniProtKB-UniRule"/>
</dbReference>
<dbReference type="CDD" id="cd00860">
    <property type="entry name" value="ThrRS_anticodon"/>
    <property type="match status" value="1"/>
</dbReference>
<dbReference type="FunFam" id="3.30.930.10:FF:000076">
    <property type="entry name" value="Threonine--tRNA ligase"/>
    <property type="match status" value="1"/>
</dbReference>
<dbReference type="FunFam" id="3.40.50.800:FF:000001">
    <property type="entry name" value="Threonine--tRNA ligase"/>
    <property type="match status" value="1"/>
</dbReference>
<dbReference type="FunFam" id="3.50.80.10:FF:000004">
    <property type="entry name" value="Threonine--tRNA ligase"/>
    <property type="match status" value="1"/>
</dbReference>
<dbReference type="Gene3D" id="3.40.50.800">
    <property type="entry name" value="Anticodon-binding domain"/>
    <property type="match status" value="1"/>
</dbReference>
<dbReference type="Gene3D" id="3.30.930.10">
    <property type="entry name" value="Bira Bifunctional Protein, Domain 2"/>
    <property type="match status" value="1"/>
</dbReference>
<dbReference type="Gene3D" id="3.50.80.10">
    <property type="entry name" value="D-tyrosyl-tRNA(Tyr) deacylase"/>
    <property type="match status" value="1"/>
</dbReference>
<dbReference type="HAMAP" id="MF_00184">
    <property type="entry name" value="Thr_tRNA_synth"/>
    <property type="match status" value="1"/>
</dbReference>
<dbReference type="InterPro" id="IPR002314">
    <property type="entry name" value="aa-tRNA-synt_IIb"/>
</dbReference>
<dbReference type="InterPro" id="IPR006195">
    <property type="entry name" value="aa-tRNA-synth_II"/>
</dbReference>
<dbReference type="InterPro" id="IPR045864">
    <property type="entry name" value="aa-tRNA-synth_II/BPL/LPL"/>
</dbReference>
<dbReference type="InterPro" id="IPR004154">
    <property type="entry name" value="Anticodon-bd"/>
</dbReference>
<dbReference type="InterPro" id="IPR036621">
    <property type="entry name" value="Anticodon-bd_dom_sf"/>
</dbReference>
<dbReference type="InterPro" id="IPR023509">
    <property type="entry name" value="DTD-like_sf"/>
</dbReference>
<dbReference type="InterPro" id="IPR002320">
    <property type="entry name" value="Thr-tRNA-ligase_IIa"/>
</dbReference>
<dbReference type="InterPro" id="IPR015011">
    <property type="entry name" value="Threonyl-tRNA_syn_edit_dom_arc"/>
</dbReference>
<dbReference type="InterPro" id="IPR047246">
    <property type="entry name" value="ThrRS_anticodon"/>
</dbReference>
<dbReference type="NCBIfam" id="NF003068">
    <property type="entry name" value="PRK03991.1"/>
    <property type="match status" value="1"/>
</dbReference>
<dbReference type="NCBIfam" id="TIGR00418">
    <property type="entry name" value="thrS"/>
    <property type="match status" value="1"/>
</dbReference>
<dbReference type="PANTHER" id="PTHR11451:SF44">
    <property type="entry name" value="THREONINE--TRNA LIGASE, CHLOROPLASTIC_MITOCHONDRIAL 2"/>
    <property type="match status" value="1"/>
</dbReference>
<dbReference type="PANTHER" id="PTHR11451">
    <property type="entry name" value="THREONINE-TRNA LIGASE"/>
    <property type="match status" value="1"/>
</dbReference>
<dbReference type="Pfam" id="PF03129">
    <property type="entry name" value="HGTP_anticodon"/>
    <property type="match status" value="1"/>
</dbReference>
<dbReference type="Pfam" id="PF00587">
    <property type="entry name" value="tRNA-synt_2b"/>
    <property type="match status" value="1"/>
</dbReference>
<dbReference type="Pfam" id="PF08915">
    <property type="entry name" value="tRNA-Thr_ED"/>
    <property type="match status" value="1"/>
</dbReference>
<dbReference type="PRINTS" id="PR01047">
    <property type="entry name" value="TRNASYNTHTHR"/>
</dbReference>
<dbReference type="SUPFAM" id="SSF52954">
    <property type="entry name" value="Class II aaRS ABD-related"/>
    <property type="match status" value="1"/>
</dbReference>
<dbReference type="SUPFAM" id="SSF55681">
    <property type="entry name" value="Class II aaRS and biotin synthetases"/>
    <property type="match status" value="1"/>
</dbReference>
<dbReference type="PROSITE" id="PS50862">
    <property type="entry name" value="AA_TRNA_LIGASE_II"/>
    <property type="match status" value="1"/>
</dbReference>
<organism>
    <name type="scientific">Methanococcoides burtonii (strain DSM 6242 / NBRC 107633 / OCM 468 / ACE-M)</name>
    <dbReference type="NCBI Taxonomy" id="259564"/>
    <lineage>
        <taxon>Archaea</taxon>
        <taxon>Methanobacteriati</taxon>
        <taxon>Methanobacteriota</taxon>
        <taxon>Stenosarchaea group</taxon>
        <taxon>Methanomicrobia</taxon>
        <taxon>Methanosarcinales</taxon>
        <taxon>Methanosarcinaceae</taxon>
        <taxon>Methanococcoides</taxon>
    </lineage>
</organism>
<proteinExistence type="inferred from homology"/>
<gene>
    <name evidence="1" type="primary">thrS</name>
    <name type="ordered locus">Mbur_1324</name>
</gene>
<sequence>MQLLLIHSDYIEYEVKKSTPVAEEIEESFKQGRLEDALTAFMAVESFDEANPQEIIDRAVSEIENVAGQVKAENIMLYPYAHLSSDLSSPKVAVSVLKGIENALEGKYNVMRAPFGWYKAFRISCKGHPLSELSRTIRLEGAVPCGKVVSLDAEKKEVVSEALKAEDSAKSYWRILTPDGELHDAETFDLTGHDNLQKFVDYEISKNRNIEKAPPHVELMRRLEIADYEPGSDSGNMRYYPKGRLMKSLIENFVLEESSKIGAMEVETPLMYDMNHPTLKKYLDRFPARQYSIESDKRHMFLRFAACFGQFLMNHDMTISYKNLPLKMIEMTRYSFRKEQRGELVGLRRLRAFTMPDMHTLCPDMEAAISQFGEQYSMCIDILRKIGIDVSDFEVAIRFTREFYDDNREFITELAKKVDKPVLVEMWDTRFFYFVLKFEFNFVDAIAKASALSTVQIDVENAERYDINYVDANGKINRPTILHCSPSGAIERCIYALLEKAAMDAEEGKVPNLPVWLSPTQVRVIPIAERHMDFAQEVADSLLCRADIDDREETVGKKIRDAGREWIPYVAVIGDSEVESGKVTVTIRAESEPKKPMKVEMTAEELSERVFNEIGDMPYRSLPLAKLLSMRPKFI</sequence>